<dbReference type="EMBL" id="Z70678">
    <property type="protein sequence ID" value="CAA94537.1"/>
    <property type="molecule type" value="Genomic_DNA"/>
</dbReference>
<dbReference type="EMBL" id="Z74960">
    <property type="protein sequence ID" value="CAA99244.1"/>
    <property type="molecule type" value="Genomic_DNA"/>
</dbReference>
<dbReference type="EMBL" id="AY558030">
    <property type="protein sequence ID" value="AAS56356.1"/>
    <property type="molecule type" value="Genomic_DNA"/>
</dbReference>
<dbReference type="EMBL" id="BK006948">
    <property type="protein sequence ID" value="DAA10833.1"/>
    <property type="molecule type" value="Genomic_DNA"/>
</dbReference>
<dbReference type="PIR" id="S66926">
    <property type="entry name" value="S66926"/>
</dbReference>
<dbReference type="RefSeq" id="NP_014695.1">
    <property type="nucleotide sequence ID" value="NM_001183471.1"/>
</dbReference>
<dbReference type="SMR" id="Q08422"/>
<dbReference type="BioGRID" id="34452">
    <property type="interactions" value="89"/>
</dbReference>
<dbReference type="FunCoup" id="Q08422">
    <property type="interactions" value="82"/>
</dbReference>
<dbReference type="IntAct" id="Q08422">
    <property type="interactions" value="1"/>
</dbReference>
<dbReference type="MINT" id="Q08422"/>
<dbReference type="STRING" id="4932.YOR052C"/>
<dbReference type="iPTMnet" id="Q08422"/>
<dbReference type="PaxDb" id="4932-YOR052C"/>
<dbReference type="PeptideAtlas" id="Q08422"/>
<dbReference type="EnsemblFungi" id="YOR052C_mRNA">
    <property type="protein sequence ID" value="YOR052C"/>
    <property type="gene ID" value="YOR052C"/>
</dbReference>
<dbReference type="GeneID" id="854217"/>
<dbReference type="KEGG" id="sce:YOR052C"/>
<dbReference type="AGR" id="SGD:S000005578"/>
<dbReference type="SGD" id="S000005578">
    <property type="gene designation" value="TMC1"/>
</dbReference>
<dbReference type="VEuPathDB" id="FungiDB:YOR052C"/>
<dbReference type="eggNOG" id="ENOG502S4H4">
    <property type="taxonomic scope" value="Eukaryota"/>
</dbReference>
<dbReference type="HOGENOM" id="CLU_010412_4_1_1"/>
<dbReference type="InParanoid" id="Q08422"/>
<dbReference type="OMA" id="SCKEEMH"/>
<dbReference type="OrthoDB" id="428577at2759"/>
<dbReference type="BioCyc" id="YEAST:G3O-33595-MONOMER"/>
<dbReference type="BioGRID-ORCS" id="854217">
    <property type="hits" value="0 hits in 10 CRISPR screens"/>
</dbReference>
<dbReference type="PRO" id="PR:Q08422"/>
<dbReference type="Proteomes" id="UP000002311">
    <property type="component" value="Chromosome XV"/>
</dbReference>
<dbReference type="RNAct" id="Q08422">
    <property type="molecule type" value="protein"/>
</dbReference>
<dbReference type="GO" id="GO:0005737">
    <property type="term" value="C:cytoplasm"/>
    <property type="evidence" value="ECO:0000318"/>
    <property type="project" value="GO_Central"/>
</dbReference>
<dbReference type="GO" id="GO:0005634">
    <property type="term" value="C:nucleus"/>
    <property type="evidence" value="ECO:0007005"/>
    <property type="project" value="SGD"/>
</dbReference>
<dbReference type="GO" id="GO:0008270">
    <property type="term" value="F:zinc ion binding"/>
    <property type="evidence" value="ECO:0007669"/>
    <property type="project" value="UniProtKB-KW"/>
</dbReference>
<dbReference type="GO" id="GO:0071243">
    <property type="term" value="P:cellular response to arsenic-containing substance"/>
    <property type="evidence" value="ECO:0000314"/>
    <property type="project" value="SGD"/>
</dbReference>
<dbReference type="GO" id="GO:0071218">
    <property type="term" value="P:cellular response to misfolded protein"/>
    <property type="evidence" value="ECO:0000314"/>
    <property type="project" value="SGD"/>
</dbReference>
<dbReference type="FunFam" id="4.10.1110.10:FF:000008">
    <property type="entry name" value="YOR052C-like protein"/>
    <property type="match status" value="1"/>
</dbReference>
<dbReference type="Gene3D" id="4.10.1110.10">
    <property type="entry name" value="AN1-like Zinc finger"/>
    <property type="match status" value="1"/>
</dbReference>
<dbReference type="InterPro" id="IPR035896">
    <property type="entry name" value="AN1-like_Znf"/>
</dbReference>
<dbReference type="InterPro" id="IPR000058">
    <property type="entry name" value="Znf_AN1"/>
</dbReference>
<dbReference type="Pfam" id="PF01428">
    <property type="entry name" value="zf-AN1"/>
    <property type="match status" value="1"/>
</dbReference>
<dbReference type="SMART" id="SM00154">
    <property type="entry name" value="ZnF_AN1"/>
    <property type="match status" value="1"/>
</dbReference>
<dbReference type="SUPFAM" id="SSF118310">
    <property type="entry name" value="AN1-like Zinc finger"/>
    <property type="match status" value="1"/>
</dbReference>
<dbReference type="PROSITE" id="PS51039">
    <property type="entry name" value="ZF_AN1"/>
    <property type="match status" value="1"/>
</dbReference>
<accession>Q08422</accession>
<accession>D6W2B7</accession>
<accession>O00017</accession>
<reference key="1">
    <citation type="journal article" date="1997" name="Yeast">
        <title>The sequence of a 54.7 kb fragment of yeast chromosome XV reveals the presence of two tRNAs and 24 new open reading frames.</title>
        <authorList>
            <person name="Valens M."/>
            <person name="Bohn C."/>
            <person name="Daignan-Fornier B."/>
            <person name="Dang V.-D."/>
            <person name="Bolotin-Fukuhara M."/>
        </authorList>
    </citation>
    <scope>NUCLEOTIDE SEQUENCE [GENOMIC DNA]</scope>
    <source>
        <strain>ATCC 96604 / S288c / FY1679</strain>
    </source>
</reference>
<reference key="2">
    <citation type="journal article" date="1997" name="Nature">
        <title>The nucleotide sequence of Saccharomyces cerevisiae chromosome XV.</title>
        <authorList>
            <person name="Dujon B."/>
            <person name="Albermann K."/>
            <person name="Aldea M."/>
            <person name="Alexandraki D."/>
            <person name="Ansorge W."/>
            <person name="Arino J."/>
            <person name="Benes V."/>
            <person name="Bohn C."/>
            <person name="Bolotin-Fukuhara M."/>
            <person name="Bordonne R."/>
            <person name="Boyer J."/>
            <person name="Camasses A."/>
            <person name="Casamayor A."/>
            <person name="Casas C."/>
            <person name="Cheret G."/>
            <person name="Cziepluch C."/>
            <person name="Daignan-Fornier B."/>
            <person name="Dang V.-D."/>
            <person name="de Haan M."/>
            <person name="Delius H."/>
            <person name="Durand P."/>
            <person name="Fairhead C."/>
            <person name="Feldmann H."/>
            <person name="Gaillon L."/>
            <person name="Galisson F."/>
            <person name="Gamo F.-J."/>
            <person name="Gancedo C."/>
            <person name="Goffeau A."/>
            <person name="Goulding S.E."/>
            <person name="Grivell L.A."/>
            <person name="Habbig B."/>
            <person name="Hand N.J."/>
            <person name="Hani J."/>
            <person name="Hattenhorst U."/>
            <person name="Hebling U."/>
            <person name="Hernando Y."/>
            <person name="Herrero E."/>
            <person name="Heumann K."/>
            <person name="Hiesel R."/>
            <person name="Hilger F."/>
            <person name="Hofmann B."/>
            <person name="Hollenberg C.P."/>
            <person name="Hughes B."/>
            <person name="Jauniaux J.-C."/>
            <person name="Kalogeropoulos A."/>
            <person name="Katsoulou C."/>
            <person name="Kordes E."/>
            <person name="Lafuente M.J."/>
            <person name="Landt O."/>
            <person name="Louis E.J."/>
            <person name="Maarse A.C."/>
            <person name="Madania A."/>
            <person name="Mannhaupt G."/>
            <person name="Marck C."/>
            <person name="Martin R.P."/>
            <person name="Mewes H.-W."/>
            <person name="Michaux G."/>
            <person name="Paces V."/>
            <person name="Parle-McDermott A.G."/>
            <person name="Pearson B.M."/>
            <person name="Perrin A."/>
            <person name="Pettersson B."/>
            <person name="Poch O."/>
            <person name="Pohl T.M."/>
            <person name="Poirey R."/>
            <person name="Portetelle D."/>
            <person name="Pujol A."/>
            <person name="Purnelle B."/>
            <person name="Ramezani Rad M."/>
            <person name="Rechmann S."/>
            <person name="Schwager C."/>
            <person name="Schweizer M."/>
            <person name="Sor F."/>
            <person name="Sterky F."/>
            <person name="Tarassov I.A."/>
            <person name="Teodoru C."/>
            <person name="Tettelin H."/>
            <person name="Thierry A."/>
            <person name="Tobiasch E."/>
            <person name="Tzermia M."/>
            <person name="Uhlen M."/>
            <person name="Unseld M."/>
            <person name="Valens M."/>
            <person name="Vandenbol M."/>
            <person name="Vetter I."/>
            <person name="Vlcek C."/>
            <person name="Voet M."/>
            <person name="Volckaert G."/>
            <person name="Voss H."/>
            <person name="Wambutt R."/>
            <person name="Wedler H."/>
            <person name="Wiemann S."/>
            <person name="Winsor B."/>
            <person name="Wolfe K.H."/>
            <person name="Zollner A."/>
            <person name="Zumstein E."/>
            <person name="Kleine K."/>
        </authorList>
    </citation>
    <scope>NUCLEOTIDE SEQUENCE [LARGE SCALE GENOMIC DNA]</scope>
    <source>
        <strain>ATCC 204508 / S288c</strain>
    </source>
</reference>
<reference key="3">
    <citation type="journal article" date="2014" name="G3 (Bethesda)">
        <title>The reference genome sequence of Saccharomyces cerevisiae: Then and now.</title>
        <authorList>
            <person name="Engel S.R."/>
            <person name="Dietrich F.S."/>
            <person name="Fisk D.G."/>
            <person name="Binkley G."/>
            <person name="Balakrishnan R."/>
            <person name="Costanzo M.C."/>
            <person name="Dwight S.S."/>
            <person name="Hitz B.C."/>
            <person name="Karra K."/>
            <person name="Nash R.S."/>
            <person name="Weng S."/>
            <person name="Wong E.D."/>
            <person name="Lloyd P."/>
            <person name="Skrzypek M.S."/>
            <person name="Miyasato S.R."/>
            <person name="Simison M."/>
            <person name="Cherry J.M."/>
        </authorList>
    </citation>
    <scope>GENOME REANNOTATION</scope>
    <source>
        <strain>ATCC 204508 / S288c</strain>
    </source>
</reference>
<reference key="4">
    <citation type="journal article" date="2007" name="Genome Res.">
        <title>Approaching a complete repository of sequence-verified protein-encoding clones for Saccharomyces cerevisiae.</title>
        <authorList>
            <person name="Hu Y."/>
            <person name="Rolfs A."/>
            <person name="Bhullar B."/>
            <person name="Murthy T.V.S."/>
            <person name="Zhu C."/>
            <person name="Berger M.F."/>
            <person name="Camargo A.A."/>
            <person name="Kelley F."/>
            <person name="McCarron S."/>
            <person name="Jepson D."/>
            <person name="Richardson A."/>
            <person name="Raphael J."/>
            <person name="Moreira D."/>
            <person name="Taycher E."/>
            <person name="Zuo D."/>
            <person name="Mohr S."/>
            <person name="Kane M.F."/>
            <person name="Williamson J."/>
            <person name="Simpson A.J.G."/>
            <person name="Bulyk M.L."/>
            <person name="Harlow E."/>
            <person name="Marsischky G."/>
            <person name="Kolodner R.D."/>
            <person name="LaBaer J."/>
        </authorList>
    </citation>
    <scope>NUCLEOTIDE SEQUENCE [GENOMIC DNA]</scope>
    <source>
        <strain>ATCC 204508 / S288c</strain>
    </source>
</reference>
<reference key="5">
    <citation type="journal article" date="2003" name="Nature">
        <title>Global analysis of protein localization in budding yeast.</title>
        <authorList>
            <person name="Huh W.-K."/>
            <person name="Falvo J.V."/>
            <person name="Gerke L.C."/>
            <person name="Carroll A.S."/>
            <person name="Howson R.W."/>
            <person name="Weissman J.S."/>
            <person name="O'Shea E.K."/>
        </authorList>
    </citation>
    <scope>SUBCELLULAR LOCATION [LARGE SCALE ANALYSIS]</scope>
</reference>
<reference key="6">
    <citation type="journal article" date="2003" name="Nature">
        <title>Global analysis of protein expression in yeast.</title>
        <authorList>
            <person name="Ghaemmaghami S."/>
            <person name="Huh W.-K."/>
            <person name="Bower K."/>
            <person name="Howson R.W."/>
            <person name="Belle A."/>
            <person name="Dephoure N."/>
            <person name="O'Shea E.K."/>
            <person name="Weissman J.S."/>
        </authorList>
    </citation>
    <scope>LEVEL OF PROTEIN EXPRESSION [LARGE SCALE ANALYSIS]</scope>
</reference>
<reference key="7">
    <citation type="journal article" date="2007" name="J. Proteome Res.">
        <title>Large-scale phosphorylation analysis of alpha-factor-arrested Saccharomyces cerevisiae.</title>
        <authorList>
            <person name="Li X."/>
            <person name="Gerber S.A."/>
            <person name="Rudner A.D."/>
            <person name="Beausoleil S.A."/>
            <person name="Haas W."/>
            <person name="Villen J."/>
            <person name="Elias J.E."/>
            <person name="Gygi S.P."/>
        </authorList>
    </citation>
    <scope>PHOSPHORYLATION [LARGE SCALE ANALYSIS] AT SER-54</scope>
    <scope>IDENTIFICATION BY MASS SPECTROMETRY [LARGE SCALE ANALYSIS]</scope>
    <source>
        <strain>ADR376</strain>
    </source>
</reference>
<reference key="8">
    <citation type="journal article" date="2008" name="Mol. Cell. Proteomics">
        <title>A multidimensional chromatography technology for in-depth phosphoproteome analysis.</title>
        <authorList>
            <person name="Albuquerque C.P."/>
            <person name="Smolka M.B."/>
            <person name="Payne S.H."/>
            <person name="Bafna V."/>
            <person name="Eng J."/>
            <person name="Zhou H."/>
        </authorList>
    </citation>
    <scope>PHOSPHORYLATION [LARGE SCALE ANALYSIS] AT SER-54</scope>
    <scope>IDENTIFICATION BY MASS SPECTROMETRY [LARGE SCALE ANALYSIS]</scope>
</reference>
<reference key="9">
    <citation type="journal article" date="2009" name="Science">
        <title>Global analysis of Cdk1 substrate phosphorylation sites provides insights into evolution.</title>
        <authorList>
            <person name="Holt L.J."/>
            <person name="Tuch B.B."/>
            <person name="Villen J."/>
            <person name="Johnson A.D."/>
            <person name="Gygi S.P."/>
            <person name="Morgan D.O."/>
        </authorList>
    </citation>
    <scope>PHOSPHORYLATION [LARGE SCALE ANALYSIS] AT SER-43</scope>
    <scope>IDENTIFICATION BY MASS SPECTROMETRY [LARGE SCALE ANALYSIS]</scope>
</reference>
<reference key="10">
    <citation type="journal article" date="2012" name="Proc. Natl. Acad. Sci. U.S.A.">
        <title>N-terminal acetylome analyses and functional insights of the N-terminal acetyltransferase NatB.</title>
        <authorList>
            <person name="Van Damme P."/>
            <person name="Lasa M."/>
            <person name="Polevoda B."/>
            <person name="Gazquez C."/>
            <person name="Elosegui-Artola A."/>
            <person name="Kim D.S."/>
            <person name="De Juan-Pardo E."/>
            <person name="Demeyer K."/>
            <person name="Hole K."/>
            <person name="Larrea E."/>
            <person name="Timmerman E."/>
            <person name="Prieto J."/>
            <person name="Arnesen T."/>
            <person name="Sherman F."/>
            <person name="Gevaert K."/>
            <person name="Aldabe R."/>
        </authorList>
    </citation>
    <scope>ACETYLATION [LARGE SCALE ANALYSIS] AT SER-2</scope>
    <scope>CLEAVAGE OF INITIATOR METHIONINE [LARGE SCALE ANALYSIS]</scope>
    <scope>IDENTIFICATION BY MASS SPECTROMETRY [LARGE SCALE ANALYSIS]</scope>
</reference>
<reference key="11">
    <citation type="journal article" date="2014" name="J. Biol. Chem.">
        <title>Cuz1/Ynl155w, a zinc-dependent ubiquitin-binding protein, protects cells from metalloid-induced proteotoxicity.</title>
        <authorList>
            <person name="Hanna J."/>
            <person name="Waterman D."/>
            <person name="Isasa M."/>
            <person name="Elsasser S."/>
            <person name="Shi Y."/>
            <person name="Gygi S."/>
            <person name="Finley D."/>
        </authorList>
    </citation>
    <scope>FUNCTION</scope>
</reference>
<sequence>MSDINEIEIPSRKDEIRQVTPKDPMHEIEDKSTYHAKIKKSDSGTVLGAIPLNSRSSSNSSVTSTGQSSRRVTKKTTKKKKKNACYFDTCSSAASKFIGDCNFCKGHFCSKHRLMENHACNGLTSCKEQLHQRNADKLEAEQTKAPKIQI</sequence>
<gene>
    <name evidence="6" type="primary">TMC1</name>
    <name evidence="8" type="ordered locus">YOR052C</name>
    <name type="ORF">YOR29-03</name>
</gene>
<organism>
    <name type="scientific">Saccharomyces cerevisiae (strain ATCC 204508 / S288c)</name>
    <name type="common">Baker's yeast</name>
    <dbReference type="NCBI Taxonomy" id="559292"/>
    <lineage>
        <taxon>Eukaryota</taxon>
        <taxon>Fungi</taxon>
        <taxon>Dikarya</taxon>
        <taxon>Ascomycota</taxon>
        <taxon>Saccharomycotina</taxon>
        <taxon>Saccharomycetes</taxon>
        <taxon>Saccharomycetales</taxon>
        <taxon>Saccharomycetaceae</taxon>
        <taxon>Saccharomyces</taxon>
    </lineage>
</organism>
<name>TMC1_YEAST</name>
<comment type="function">
    <text evidence="5">May have a role in protecting cells from metalloid-induced proteotoxicity.</text>
</comment>
<comment type="subcellular location">
    <subcellularLocation>
        <location evidence="3">Nucleus</location>
    </subcellularLocation>
</comment>
<comment type="miscellaneous">
    <text evidence="4">Present with 9520 molecules/cell in log phase SD medium.</text>
</comment>
<evidence type="ECO:0000255" key="1">
    <source>
        <dbReference type="PROSITE-ProRule" id="PRU00449"/>
    </source>
</evidence>
<evidence type="ECO:0000256" key="2">
    <source>
        <dbReference type="SAM" id="MobiDB-lite"/>
    </source>
</evidence>
<evidence type="ECO:0000269" key="3">
    <source>
    </source>
</evidence>
<evidence type="ECO:0000269" key="4">
    <source>
    </source>
</evidence>
<evidence type="ECO:0000269" key="5">
    <source>
    </source>
</evidence>
<evidence type="ECO:0000303" key="6">
    <source>
    </source>
</evidence>
<evidence type="ECO:0000305" key="7"/>
<evidence type="ECO:0000312" key="8">
    <source>
        <dbReference type="SGD" id="S000005578"/>
    </source>
</evidence>
<evidence type="ECO:0007744" key="9">
    <source>
    </source>
</evidence>
<evidence type="ECO:0007744" key="10">
    <source>
    </source>
</evidence>
<evidence type="ECO:0007744" key="11">
    <source>
    </source>
</evidence>
<evidence type="ECO:0007744" key="12">
    <source>
    </source>
</evidence>
<proteinExistence type="evidence at protein level"/>
<keyword id="KW-0007">Acetylation</keyword>
<keyword id="KW-0479">Metal-binding</keyword>
<keyword id="KW-0539">Nucleus</keyword>
<keyword id="KW-0597">Phosphoprotein</keyword>
<keyword id="KW-1185">Reference proteome</keyword>
<keyword id="KW-0346">Stress response</keyword>
<keyword id="KW-0862">Zinc</keyword>
<keyword id="KW-0863">Zinc-finger</keyword>
<feature type="initiator methionine" description="Removed" evidence="12">
    <location>
        <position position="1"/>
    </location>
</feature>
<feature type="chain" id="PRO_0000237648" description="AN1-type zinc finger protein TMC1">
    <location>
        <begin position="2"/>
        <end position="150"/>
    </location>
</feature>
<feature type="zinc finger region" description="AN1-type" evidence="1">
    <location>
        <begin position="79"/>
        <end position="128"/>
    </location>
</feature>
<feature type="region of interest" description="Disordered" evidence="2">
    <location>
        <begin position="1"/>
        <end position="82"/>
    </location>
</feature>
<feature type="compositionally biased region" description="Basic and acidic residues" evidence="2">
    <location>
        <begin position="23"/>
        <end position="33"/>
    </location>
</feature>
<feature type="compositionally biased region" description="Low complexity" evidence="2">
    <location>
        <begin position="53"/>
        <end position="70"/>
    </location>
</feature>
<feature type="compositionally biased region" description="Basic residues" evidence="2">
    <location>
        <begin position="71"/>
        <end position="82"/>
    </location>
</feature>
<feature type="binding site" evidence="1">
    <location>
        <position position="85"/>
    </location>
    <ligand>
        <name>Zn(2+)</name>
        <dbReference type="ChEBI" id="CHEBI:29105"/>
        <label>1</label>
    </ligand>
</feature>
<feature type="binding site" evidence="1">
    <location>
        <position position="90"/>
    </location>
    <ligand>
        <name>Zn(2+)</name>
        <dbReference type="ChEBI" id="CHEBI:29105"/>
        <label>1</label>
    </ligand>
</feature>
<feature type="binding site" evidence="1">
    <location>
        <position position="101"/>
    </location>
    <ligand>
        <name>Zn(2+)</name>
        <dbReference type="ChEBI" id="CHEBI:29105"/>
        <label>2</label>
    </ligand>
</feature>
<feature type="binding site" evidence="1">
    <location>
        <position position="104"/>
    </location>
    <ligand>
        <name>Zn(2+)</name>
        <dbReference type="ChEBI" id="CHEBI:29105"/>
        <label>2</label>
    </ligand>
</feature>
<feature type="binding site" evidence="1">
    <location>
        <position position="109"/>
    </location>
    <ligand>
        <name>Zn(2+)</name>
        <dbReference type="ChEBI" id="CHEBI:29105"/>
        <label>1</label>
    </ligand>
</feature>
<feature type="binding site" evidence="1">
    <location>
        <position position="112"/>
    </location>
    <ligand>
        <name>Zn(2+)</name>
        <dbReference type="ChEBI" id="CHEBI:29105"/>
        <label>1</label>
    </ligand>
</feature>
<feature type="binding site" evidence="1">
    <location>
        <position position="118"/>
    </location>
    <ligand>
        <name>Zn(2+)</name>
        <dbReference type="ChEBI" id="CHEBI:29105"/>
        <label>2</label>
    </ligand>
</feature>
<feature type="binding site" evidence="1">
    <location>
        <position position="120"/>
    </location>
    <ligand>
        <name>Zn(2+)</name>
        <dbReference type="ChEBI" id="CHEBI:29105"/>
        <label>2</label>
    </ligand>
</feature>
<feature type="modified residue" description="N-acetylserine" evidence="12">
    <location>
        <position position="2"/>
    </location>
</feature>
<feature type="modified residue" description="Phosphoserine" evidence="11">
    <location>
        <position position="43"/>
    </location>
</feature>
<feature type="modified residue" description="Phosphoserine" evidence="9 10">
    <location>
        <position position="54"/>
    </location>
</feature>
<protein>
    <recommendedName>
        <fullName evidence="7">AN1-type zinc finger protein TMC1</fullName>
    </recommendedName>
    <alternativeName>
        <fullName evidence="6">Trivalent metalloid-sensitive Cuz1-related protein 1</fullName>
    </alternativeName>
</protein>